<name>GLUQ_RALN1</name>
<organism>
    <name type="scientific">Ralstonia nicotianae (strain ATCC BAA-1114 / GMI1000)</name>
    <name type="common">Ralstonia solanacearum</name>
    <dbReference type="NCBI Taxonomy" id="267608"/>
    <lineage>
        <taxon>Bacteria</taxon>
        <taxon>Pseudomonadati</taxon>
        <taxon>Pseudomonadota</taxon>
        <taxon>Betaproteobacteria</taxon>
        <taxon>Burkholderiales</taxon>
        <taxon>Burkholderiaceae</taxon>
        <taxon>Ralstonia</taxon>
        <taxon>Ralstonia solanacearum species complex</taxon>
    </lineage>
</organism>
<sequence>MSQANLEFPESVAAAPRGPYRGRFAPSPTGPLHIGSLVTALASWLDARVHGGTWLVRIEDIDFQRNVPGADRDILASLETLGLVPDEAPQWQSAHLPRFEAALAQLQAIDRLYPCGCTRREIADSITTVDAQGRLRHQTLIYPGTCRNGLMGRPPRAWRVRLPDADAATVCFDDRWQGTQCQNLAEAVGDFVLKRADGMWAYQIAVVVDDAAQGITDVVRGADLLDSTPRQIYLQRLLGLPAVRYLHVPVVVNAAGEKLSKQTGARAINRSQPLAALTEAARHLGLEIRAADMEGFYRAAVPAWAHRLAQLTPAA</sequence>
<feature type="chain" id="PRO_0000208320" description="Glutamyl-Q tRNA(Asp) synthetase">
    <location>
        <begin position="1"/>
        <end position="315"/>
    </location>
</feature>
<feature type="short sequence motif" description="'HIGH' region">
    <location>
        <begin position="26"/>
        <end position="36"/>
    </location>
</feature>
<feature type="short sequence motif" description="'KMSKS' region">
    <location>
        <begin position="258"/>
        <end position="262"/>
    </location>
</feature>
<feature type="binding site" evidence="1">
    <location>
        <begin position="23"/>
        <end position="27"/>
    </location>
    <ligand>
        <name>L-glutamate</name>
        <dbReference type="ChEBI" id="CHEBI:29985"/>
    </ligand>
</feature>
<feature type="binding site" evidence="1">
    <location>
        <position position="59"/>
    </location>
    <ligand>
        <name>L-glutamate</name>
        <dbReference type="ChEBI" id="CHEBI:29985"/>
    </ligand>
</feature>
<feature type="binding site" evidence="1">
    <location>
        <position position="115"/>
    </location>
    <ligand>
        <name>Zn(2+)</name>
        <dbReference type="ChEBI" id="CHEBI:29105"/>
    </ligand>
</feature>
<feature type="binding site" evidence="1">
    <location>
        <position position="117"/>
    </location>
    <ligand>
        <name>Zn(2+)</name>
        <dbReference type="ChEBI" id="CHEBI:29105"/>
    </ligand>
</feature>
<feature type="binding site" evidence="1">
    <location>
        <position position="142"/>
    </location>
    <ligand>
        <name>Zn(2+)</name>
        <dbReference type="ChEBI" id="CHEBI:29105"/>
    </ligand>
</feature>
<feature type="binding site" evidence="1">
    <location>
        <position position="146"/>
    </location>
    <ligand>
        <name>Zn(2+)</name>
        <dbReference type="ChEBI" id="CHEBI:29105"/>
    </ligand>
</feature>
<feature type="binding site" evidence="1">
    <location>
        <position position="202"/>
    </location>
    <ligand>
        <name>L-glutamate</name>
        <dbReference type="ChEBI" id="CHEBI:29985"/>
    </ligand>
</feature>
<feature type="binding site" evidence="1">
    <location>
        <position position="220"/>
    </location>
    <ligand>
        <name>L-glutamate</name>
        <dbReference type="ChEBI" id="CHEBI:29985"/>
    </ligand>
</feature>
<feature type="binding site" evidence="1">
    <location>
        <position position="261"/>
    </location>
    <ligand>
        <name>ATP</name>
        <dbReference type="ChEBI" id="CHEBI:30616"/>
    </ligand>
</feature>
<dbReference type="EC" id="6.1.1.-" evidence="1"/>
<dbReference type="EMBL" id="AL646052">
    <property type="protein sequence ID" value="CAD15917.1"/>
    <property type="molecule type" value="Genomic_DNA"/>
</dbReference>
<dbReference type="SMR" id="Q8XXA6"/>
<dbReference type="STRING" id="267608.RSc2210"/>
<dbReference type="EnsemblBacteria" id="CAD15917">
    <property type="protein sequence ID" value="CAD15917"/>
    <property type="gene ID" value="RSc2210"/>
</dbReference>
<dbReference type="KEGG" id="rso:RSc2210"/>
<dbReference type="eggNOG" id="COG0008">
    <property type="taxonomic scope" value="Bacteria"/>
</dbReference>
<dbReference type="HOGENOM" id="CLU_015768_0_1_4"/>
<dbReference type="Proteomes" id="UP000001436">
    <property type="component" value="Chromosome"/>
</dbReference>
<dbReference type="GO" id="GO:0005829">
    <property type="term" value="C:cytosol"/>
    <property type="evidence" value="ECO:0007669"/>
    <property type="project" value="TreeGrafter"/>
</dbReference>
<dbReference type="GO" id="GO:0005524">
    <property type="term" value="F:ATP binding"/>
    <property type="evidence" value="ECO:0007669"/>
    <property type="project" value="UniProtKB-KW"/>
</dbReference>
<dbReference type="GO" id="GO:0004818">
    <property type="term" value="F:glutamate-tRNA ligase activity"/>
    <property type="evidence" value="ECO:0007669"/>
    <property type="project" value="TreeGrafter"/>
</dbReference>
<dbReference type="GO" id="GO:0008270">
    <property type="term" value="F:zinc ion binding"/>
    <property type="evidence" value="ECO:0007669"/>
    <property type="project" value="UniProtKB-UniRule"/>
</dbReference>
<dbReference type="GO" id="GO:0006424">
    <property type="term" value="P:glutamyl-tRNA aminoacylation"/>
    <property type="evidence" value="ECO:0007669"/>
    <property type="project" value="InterPro"/>
</dbReference>
<dbReference type="GO" id="GO:0006400">
    <property type="term" value="P:tRNA modification"/>
    <property type="evidence" value="ECO:0007669"/>
    <property type="project" value="InterPro"/>
</dbReference>
<dbReference type="Gene3D" id="3.40.50.620">
    <property type="entry name" value="HUPs"/>
    <property type="match status" value="1"/>
</dbReference>
<dbReference type="HAMAP" id="MF_01428">
    <property type="entry name" value="Glu_Q_tRNA_synth"/>
    <property type="match status" value="1"/>
</dbReference>
<dbReference type="InterPro" id="IPR022380">
    <property type="entry name" value="Glu-Q_tRNA(Asp)_Synthase"/>
</dbReference>
<dbReference type="InterPro" id="IPR000924">
    <property type="entry name" value="Glu/Gln-tRNA-synth"/>
</dbReference>
<dbReference type="InterPro" id="IPR020058">
    <property type="entry name" value="Glu/Gln-tRNA-synth_Ib_cat-dom"/>
</dbReference>
<dbReference type="InterPro" id="IPR049940">
    <property type="entry name" value="GluQ/Sye"/>
</dbReference>
<dbReference type="InterPro" id="IPR014729">
    <property type="entry name" value="Rossmann-like_a/b/a_fold"/>
</dbReference>
<dbReference type="NCBIfam" id="NF004313">
    <property type="entry name" value="PRK05710.1-2"/>
    <property type="match status" value="1"/>
</dbReference>
<dbReference type="NCBIfam" id="NF004314">
    <property type="entry name" value="PRK05710.1-3"/>
    <property type="match status" value="1"/>
</dbReference>
<dbReference type="NCBIfam" id="NF004315">
    <property type="entry name" value="PRK05710.1-4"/>
    <property type="match status" value="1"/>
</dbReference>
<dbReference type="NCBIfam" id="TIGR03838">
    <property type="entry name" value="queuosine_YadB"/>
    <property type="match status" value="1"/>
</dbReference>
<dbReference type="PANTHER" id="PTHR43311">
    <property type="entry name" value="GLUTAMATE--TRNA LIGASE"/>
    <property type="match status" value="1"/>
</dbReference>
<dbReference type="PANTHER" id="PTHR43311:SF1">
    <property type="entry name" value="GLUTAMYL-Q TRNA(ASP) SYNTHETASE"/>
    <property type="match status" value="1"/>
</dbReference>
<dbReference type="Pfam" id="PF00749">
    <property type="entry name" value="tRNA-synt_1c"/>
    <property type="match status" value="1"/>
</dbReference>
<dbReference type="PRINTS" id="PR00987">
    <property type="entry name" value="TRNASYNTHGLU"/>
</dbReference>
<dbReference type="SUPFAM" id="SSF52374">
    <property type="entry name" value="Nucleotidylyl transferase"/>
    <property type="match status" value="1"/>
</dbReference>
<protein>
    <recommendedName>
        <fullName evidence="1">Glutamyl-Q tRNA(Asp) synthetase</fullName>
        <shortName evidence="1">Glu-Q-RSs</shortName>
        <ecNumber evidence="1">6.1.1.-</ecNumber>
    </recommendedName>
</protein>
<proteinExistence type="inferred from homology"/>
<evidence type="ECO:0000255" key="1">
    <source>
        <dbReference type="HAMAP-Rule" id="MF_01428"/>
    </source>
</evidence>
<keyword id="KW-0030">Aminoacyl-tRNA synthetase</keyword>
<keyword id="KW-0067">ATP-binding</keyword>
<keyword id="KW-0436">Ligase</keyword>
<keyword id="KW-0479">Metal-binding</keyword>
<keyword id="KW-0547">Nucleotide-binding</keyword>
<keyword id="KW-1185">Reference proteome</keyword>
<keyword id="KW-0862">Zinc</keyword>
<accession>Q8XXA6</accession>
<gene>
    <name evidence="1" type="primary">gluQ</name>
    <name type="ordered locus">RSc2210</name>
    <name type="ORF">RS01389</name>
</gene>
<comment type="function">
    <text evidence="1">Catalyzes the tRNA-independent activation of glutamate in presence of ATP and the subsequent transfer of glutamate onto a tRNA(Asp). Glutamate is transferred on the 2-amino-5-(4,5-dihydroxy-2-cyclopenten-1-yl) moiety of the queuosine in the wobble position of the QUC anticodon.</text>
</comment>
<comment type="cofactor">
    <cofactor evidence="1">
        <name>Zn(2+)</name>
        <dbReference type="ChEBI" id="CHEBI:29105"/>
    </cofactor>
    <text evidence="1">Binds 1 zinc ion per subunit.</text>
</comment>
<comment type="similarity">
    <text evidence="1">Belongs to the class-I aminoacyl-tRNA synthetase family. GluQ subfamily.</text>
</comment>
<reference key="1">
    <citation type="journal article" date="2002" name="Nature">
        <title>Genome sequence of the plant pathogen Ralstonia solanacearum.</title>
        <authorList>
            <person name="Salanoubat M."/>
            <person name="Genin S."/>
            <person name="Artiguenave F."/>
            <person name="Gouzy J."/>
            <person name="Mangenot S."/>
            <person name="Arlat M."/>
            <person name="Billault A."/>
            <person name="Brottier P."/>
            <person name="Camus J.-C."/>
            <person name="Cattolico L."/>
            <person name="Chandler M."/>
            <person name="Choisne N."/>
            <person name="Claudel-Renard C."/>
            <person name="Cunnac S."/>
            <person name="Demange N."/>
            <person name="Gaspin C."/>
            <person name="Lavie M."/>
            <person name="Moisan A."/>
            <person name="Robert C."/>
            <person name="Saurin W."/>
            <person name="Schiex T."/>
            <person name="Siguier P."/>
            <person name="Thebault P."/>
            <person name="Whalen M."/>
            <person name="Wincker P."/>
            <person name="Levy M."/>
            <person name="Weissenbach J."/>
            <person name="Boucher C.A."/>
        </authorList>
    </citation>
    <scope>NUCLEOTIDE SEQUENCE [LARGE SCALE GENOMIC DNA]</scope>
    <source>
        <strain>ATCC BAA-1114 / GMI1000</strain>
    </source>
</reference>